<feature type="chain" id="PRO_0000062515" description="Ribulose bisphosphate carboxylase large chain">
    <location>
        <begin position="1" status="less than"/>
        <end position="455" status="greater than"/>
    </location>
</feature>
<feature type="active site" description="Proton acceptor" evidence="1">
    <location>
        <position position="166"/>
    </location>
</feature>
<feature type="active site" description="Proton acceptor" evidence="1">
    <location>
        <position position="285"/>
    </location>
</feature>
<feature type="binding site" description="in homodimeric partner" evidence="1">
    <location>
        <position position="114"/>
    </location>
    <ligand>
        <name>substrate</name>
    </ligand>
</feature>
<feature type="binding site" evidence="1">
    <location>
        <position position="164"/>
    </location>
    <ligand>
        <name>substrate</name>
    </ligand>
</feature>
<feature type="binding site" evidence="1">
    <location>
        <position position="168"/>
    </location>
    <ligand>
        <name>substrate</name>
    </ligand>
</feature>
<feature type="binding site" description="via carbamate group" evidence="1">
    <location>
        <position position="192"/>
    </location>
    <ligand>
        <name>Mg(2+)</name>
        <dbReference type="ChEBI" id="CHEBI:18420"/>
    </ligand>
</feature>
<feature type="binding site" evidence="1">
    <location>
        <position position="194"/>
    </location>
    <ligand>
        <name>Mg(2+)</name>
        <dbReference type="ChEBI" id="CHEBI:18420"/>
    </ligand>
</feature>
<feature type="binding site" evidence="1">
    <location>
        <position position="195"/>
    </location>
    <ligand>
        <name>Mg(2+)</name>
        <dbReference type="ChEBI" id="CHEBI:18420"/>
    </ligand>
</feature>
<feature type="binding site" evidence="1">
    <location>
        <position position="286"/>
    </location>
    <ligand>
        <name>substrate</name>
    </ligand>
</feature>
<feature type="binding site" evidence="1">
    <location>
        <position position="318"/>
    </location>
    <ligand>
        <name>substrate</name>
    </ligand>
</feature>
<feature type="binding site" evidence="1">
    <location>
        <position position="370"/>
    </location>
    <ligand>
        <name>substrate</name>
    </ligand>
</feature>
<feature type="site" description="Transition state stabilizer" evidence="1">
    <location>
        <position position="325"/>
    </location>
</feature>
<feature type="modified residue" description="N6,N6,N6-trimethyllysine" evidence="1">
    <location>
        <position position="5"/>
    </location>
</feature>
<feature type="modified residue" description="N6-carboxylysine" evidence="1">
    <location>
        <position position="192"/>
    </location>
</feature>
<feature type="disulfide bond" description="Interchain; in linked form" evidence="1">
    <location>
        <position position="238"/>
    </location>
</feature>
<feature type="non-terminal residue">
    <location>
        <position position="1"/>
    </location>
</feature>
<feature type="non-terminal residue">
    <location>
        <position position="455"/>
    </location>
</feature>
<name>RBL_LUPDI</name>
<comment type="function">
    <text evidence="1">RuBisCO catalyzes two reactions: the carboxylation of D-ribulose 1,5-bisphosphate, the primary event in carbon dioxide fixation, as well as the oxidative fragmentation of the pentose substrate in the photorespiration process. Both reactions occur simultaneously and in competition at the same active site.</text>
</comment>
<comment type="catalytic activity">
    <reaction evidence="1">
        <text>2 (2R)-3-phosphoglycerate + 2 H(+) = D-ribulose 1,5-bisphosphate + CO2 + H2O</text>
        <dbReference type="Rhea" id="RHEA:23124"/>
        <dbReference type="ChEBI" id="CHEBI:15377"/>
        <dbReference type="ChEBI" id="CHEBI:15378"/>
        <dbReference type="ChEBI" id="CHEBI:16526"/>
        <dbReference type="ChEBI" id="CHEBI:57870"/>
        <dbReference type="ChEBI" id="CHEBI:58272"/>
        <dbReference type="EC" id="4.1.1.39"/>
    </reaction>
</comment>
<comment type="catalytic activity">
    <reaction evidence="1">
        <text>D-ribulose 1,5-bisphosphate + O2 = 2-phosphoglycolate + (2R)-3-phosphoglycerate + 2 H(+)</text>
        <dbReference type="Rhea" id="RHEA:36631"/>
        <dbReference type="ChEBI" id="CHEBI:15378"/>
        <dbReference type="ChEBI" id="CHEBI:15379"/>
        <dbReference type="ChEBI" id="CHEBI:57870"/>
        <dbReference type="ChEBI" id="CHEBI:58033"/>
        <dbReference type="ChEBI" id="CHEBI:58272"/>
    </reaction>
</comment>
<comment type="cofactor">
    <cofactor evidence="1">
        <name>Mg(2+)</name>
        <dbReference type="ChEBI" id="CHEBI:18420"/>
    </cofactor>
    <text evidence="1">Binds 1 Mg(2+) ion per subunit.</text>
</comment>
<comment type="subunit">
    <text evidence="1">Heterohexadecamer of 8 large chains and 8 small chains; disulfide-linked. The disulfide link is formed within the large subunit homodimers.</text>
</comment>
<comment type="subcellular location">
    <subcellularLocation>
        <location>Plastid</location>
        <location>Chloroplast</location>
    </subcellularLocation>
</comment>
<comment type="PTM">
    <text evidence="1">The disulfide bond which can form in the large chain dimeric partners within the hexadecamer appears to be associated with oxidative stress and protein turnover.</text>
</comment>
<comment type="miscellaneous">
    <text evidence="1">The basic functional RuBisCO is composed of a large chain homodimer in a 'head-to-tail' conformation. In form I RuBisCO this homodimer is arranged in a barrel-like tetramer with the small subunits forming a tetrameric 'cap' on each end of the 'barrel'.</text>
</comment>
<comment type="similarity">
    <text evidence="1">Belongs to the RuBisCO large chain family. Type I subfamily.</text>
</comment>
<organism>
    <name type="scientific">Lupinus digitatus</name>
    <name type="common">Lupine</name>
    <dbReference type="NCBI Taxonomy" id="53225"/>
    <lineage>
        <taxon>Eukaryota</taxon>
        <taxon>Viridiplantae</taxon>
        <taxon>Streptophyta</taxon>
        <taxon>Embryophyta</taxon>
        <taxon>Tracheophyta</taxon>
        <taxon>Spermatophyta</taxon>
        <taxon>Magnoliopsida</taxon>
        <taxon>eudicotyledons</taxon>
        <taxon>Gunneridae</taxon>
        <taxon>Pentapetalae</taxon>
        <taxon>rosids</taxon>
        <taxon>fabids</taxon>
        <taxon>Fabales</taxon>
        <taxon>Fabaceae</taxon>
        <taxon>Papilionoideae</taxon>
        <taxon>50 kb inversion clade</taxon>
        <taxon>genistoids sensu lato</taxon>
        <taxon>core genistoids</taxon>
        <taxon>Genisteae</taxon>
        <taxon>Lupinus</taxon>
    </lineage>
</organism>
<geneLocation type="chloroplast"/>
<sequence>SVGFKAGVKDYKLTYYTPDYETKDTDILAAFRVTPQPGVPPEEAGAAVAAESSTGTWTTVWTDGLTSLDRYKGRCYHIEPVAGEESQFIAYVAYPLDLFEEGSVTNMFTSIVGNVFGFKALRALRLEDLRIPNAYVKTFQGPPHGIQVERDKLNKYGRPLLGCTIKPKLGLSAKNYGRAVYECLRGGLDFTKDDENVNSQPFMRWRDRFLFCAEALYKAQAETGEIKGHYLNATAGTCEEMIKRAVFARELGVPIVMHDYLTGGFTANTSLAHYCRDNGLLLHIHRAMHAVIDRQKNHGMHFRVLAKALRLSGGDHIHSGTVVGKLEGEREITLGFVDLLRDDFVEKDRSRGIYFTQDWVSLPGVLPVASGGIHVWHMPALTEIFGDDSVLQFGGGTLGHPWGNAPGAVANRVALEACVQARNEGRDLASEGNQIIREASKWSPELAAACEVWKE</sequence>
<gene>
    <name evidence="1" type="primary">rbcL</name>
</gene>
<keyword id="KW-0113">Calvin cycle</keyword>
<keyword id="KW-0120">Carbon dioxide fixation</keyword>
<keyword id="KW-0150">Chloroplast</keyword>
<keyword id="KW-1015">Disulfide bond</keyword>
<keyword id="KW-0456">Lyase</keyword>
<keyword id="KW-0460">Magnesium</keyword>
<keyword id="KW-0479">Metal-binding</keyword>
<keyword id="KW-0488">Methylation</keyword>
<keyword id="KW-0503">Monooxygenase</keyword>
<keyword id="KW-0560">Oxidoreductase</keyword>
<keyword id="KW-0601">Photorespiration</keyword>
<keyword id="KW-0602">Photosynthesis</keyword>
<keyword id="KW-0934">Plastid</keyword>
<protein>
    <recommendedName>
        <fullName evidence="1">Ribulose bisphosphate carboxylase large chain</fullName>
        <shortName evidence="1">RuBisCO large subunit</shortName>
        <ecNumber evidence="1">4.1.1.39</ecNumber>
    </recommendedName>
</protein>
<evidence type="ECO:0000255" key="1">
    <source>
        <dbReference type="HAMAP-Rule" id="MF_01338"/>
    </source>
</evidence>
<proteinExistence type="inferred from homology"/>
<dbReference type="EC" id="4.1.1.39" evidence="1"/>
<dbReference type="EMBL" id="Z70071">
    <property type="protein sequence ID" value="CAA93930.1"/>
    <property type="molecule type" value="Genomic_DNA"/>
</dbReference>
<dbReference type="SMR" id="P69580"/>
<dbReference type="GO" id="GO:0009507">
    <property type="term" value="C:chloroplast"/>
    <property type="evidence" value="ECO:0007669"/>
    <property type="project" value="UniProtKB-SubCell"/>
</dbReference>
<dbReference type="GO" id="GO:0000287">
    <property type="term" value="F:magnesium ion binding"/>
    <property type="evidence" value="ECO:0007669"/>
    <property type="project" value="InterPro"/>
</dbReference>
<dbReference type="GO" id="GO:0004497">
    <property type="term" value="F:monooxygenase activity"/>
    <property type="evidence" value="ECO:0007669"/>
    <property type="project" value="UniProtKB-KW"/>
</dbReference>
<dbReference type="GO" id="GO:0016984">
    <property type="term" value="F:ribulose-bisphosphate carboxylase activity"/>
    <property type="evidence" value="ECO:0007669"/>
    <property type="project" value="UniProtKB-EC"/>
</dbReference>
<dbReference type="GO" id="GO:0009853">
    <property type="term" value="P:photorespiration"/>
    <property type="evidence" value="ECO:0007669"/>
    <property type="project" value="UniProtKB-KW"/>
</dbReference>
<dbReference type="GO" id="GO:0019253">
    <property type="term" value="P:reductive pentose-phosphate cycle"/>
    <property type="evidence" value="ECO:0007669"/>
    <property type="project" value="UniProtKB-KW"/>
</dbReference>
<dbReference type="CDD" id="cd08212">
    <property type="entry name" value="RuBisCO_large_I"/>
    <property type="match status" value="1"/>
</dbReference>
<dbReference type="FunFam" id="3.20.20.110:FF:000001">
    <property type="entry name" value="Ribulose bisphosphate carboxylase large chain"/>
    <property type="match status" value="1"/>
</dbReference>
<dbReference type="FunFam" id="3.30.70.150:FF:000001">
    <property type="entry name" value="Ribulose bisphosphate carboxylase large chain"/>
    <property type="match status" value="1"/>
</dbReference>
<dbReference type="Gene3D" id="3.20.20.110">
    <property type="entry name" value="Ribulose bisphosphate carboxylase, large subunit, C-terminal domain"/>
    <property type="match status" value="1"/>
</dbReference>
<dbReference type="Gene3D" id="3.30.70.150">
    <property type="entry name" value="RuBisCO large subunit, N-terminal domain"/>
    <property type="match status" value="1"/>
</dbReference>
<dbReference type="HAMAP" id="MF_01338">
    <property type="entry name" value="RuBisCO_L_type1"/>
    <property type="match status" value="1"/>
</dbReference>
<dbReference type="InterPro" id="IPR033966">
    <property type="entry name" value="RuBisCO"/>
</dbReference>
<dbReference type="InterPro" id="IPR020878">
    <property type="entry name" value="RuBisCo_large_chain_AS"/>
</dbReference>
<dbReference type="InterPro" id="IPR000685">
    <property type="entry name" value="RuBisCO_lsu_C"/>
</dbReference>
<dbReference type="InterPro" id="IPR036376">
    <property type="entry name" value="RuBisCO_lsu_C_sf"/>
</dbReference>
<dbReference type="InterPro" id="IPR017443">
    <property type="entry name" value="RuBisCO_lsu_fd_N"/>
</dbReference>
<dbReference type="InterPro" id="IPR036422">
    <property type="entry name" value="RuBisCO_lsu_N_sf"/>
</dbReference>
<dbReference type="InterPro" id="IPR020888">
    <property type="entry name" value="RuBisCO_lsuI"/>
</dbReference>
<dbReference type="NCBIfam" id="NF003252">
    <property type="entry name" value="PRK04208.1"/>
    <property type="match status" value="1"/>
</dbReference>
<dbReference type="PANTHER" id="PTHR42704">
    <property type="entry name" value="RIBULOSE BISPHOSPHATE CARBOXYLASE"/>
    <property type="match status" value="1"/>
</dbReference>
<dbReference type="PANTHER" id="PTHR42704:SF16">
    <property type="entry name" value="RIBULOSE BISPHOSPHATE CARBOXYLASE LARGE CHAIN"/>
    <property type="match status" value="1"/>
</dbReference>
<dbReference type="Pfam" id="PF00016">
    <property type="entry name" value="RuBisCO_large"/>
    <property type="match status" value="1"/>
</dbReference>
<dbReference type="Pfam" id="PF02788">
    <property type="entry name" value="RuBisCO_large_N"/>
    <property type="match status" value="1"/>
</dbReference>
<dbReference type="SFLD" id="SFLDG01052">
    <property type="entry name" value="RuBisCO"/>
    <property type="match status" value="1"/>
</dbReference>
<dbReference type="SFLD" id="SFLDS00014">
    <property type="entry name" value="RuBisCO"/>
    <property type="match status" value="1"/>
</dbReference>
<dbReference type="SFLD" id="SFLDG00301">
    <property type="entry name" value="RuBisCO-like_proteins"/>
    <property type="match status" value="1"/>
</dbReference>
<dbReference type="SUPFAM" id="SSF51649">
    <property type="entry name" value="RuBisCo, C-terminal domain"/>
    <property type="match status" value="1"/>
</dbReference>
<dbReference type="SUPFAM" id="SSF54966">
    <property type="entry name" value="RuBisCO, large subunit, small (N-terminal) domain"/>
    <property type="match status" value="1"/>
</dbReference>
<dbReference type="PROSITE" id="PS00157">
    <property type="entry name" value="RUBISCO_LARGE"/>
    <property type="match status" value="1"/>
</dbReference>
<reference key="1">
    <citation type="journal article" date="1995" name="Bot. Acta">
        <title>Molecular phylogeny of the Papilionoideae (family Leguminosae): rbcL sequences versus chemical taxonomy.</title>
        <authorList>
            <person name="Kaess E."/>
            <person name="Wink M."/>
        </authorList>
    </citation>
    <scope>NUCLEOTIDE SEQUENCE [GENOMIC DNA]</scope>
    <source>
        <tissue>Leaf</tissue>
    </source>
</reference>
<accession>P69580</accession>
<accession>P92398</accession>
<accession>P92402</accession>
<accession>P92409</accession>
<accession>P92410</accession>